<gene>
    <name type="primary">pus2</name>
    <name type="ORF">SPBC887.11</name>
</gene>
<protein>
    <recommendedName>
        <fullName>tRNA pseudouridine synthase 2</fullName>
        <ecNumber>5.4.99.-</ecNumber>
    </recommendedName>
    <alternativeName>
        <fullName>tRNA pseudouridylate synthase 2</fullName>
    </alternativeName>
    <alternativeName>
        <fullName>tRNA-uridine isomerase 2</fullName>
    </alternativeName>
</protein>
<dbReference type="EC" id="5.4.99.-"/>
<dbReference type="EMBL" id="CU329671">
    <property type="protein sequence ID" value="CAA21896.1"/>
    <property type="molecule type" value="Genomic_DNA"/>
</dbReference>
<dbReference type="PIR" id="T40736">
    <property type="entry name" value="T40736"/>
</dbReference>
<dbReference type="RefSeq" id="NP_596485.1">
    <property type="nucleotide sequence ID" value="NM_001022405.2"/>
</dbReference>
<dbReference type="SMR" id="O94295"/>
<dbReference type="BioGRID" id="277750">
    <property type="interactions" value="13"/>
</dbReference>
<dbReference type="FunCoup" id="O94295">
    <property type="interactions" value="627"/>
</dbReference>
<dbReference type="STRING" id="284812.O94295"/>
<dbReference type="PaxDb" id="4896-SPBC887.11.1"/>
<dbReference type="EnsemblFungi" id="SPBC887.11.1">
    <property type="protein sequence ID" value="SPBC887.11.1:pep"/>
    <property type="gene ID" value="SPBC887.11"/>
</dbReference>
<dbReference type="GeneID" id="2541236"/>
<dbReference type="KEGG" id="spo:2541236"/>
<dbReference type="PomBase" id="SPBC887.11">
    <property type="gene designation" value="pus2"/>
</dbReference>
<dbReference type="VEuPathDB" id="FungiDB:SPBC887.11"/>
<dbReference type="eggNOG" id="KOG2553">
    <property type="taxonomic scope" value="Eukaryota"/>
</dbReference>
<dbReference type="HOGENOM" id="CLU_021971_0_0_1"/>
<dbReference type="InParanoid" id="O94295"/>
<dbReference type="OMA" id="WEWIPVT"/>
<dbReference type="PhylomeDB" id="O94295"/>
<dbReference type="PRO" id="PR:O94295"/>
<dbReference type="Proteomes" id="UP000002485">
    <property type="component" value="Chromosome II"/>
</dbReference>
<dbReference type="GO" id="GO:0005739">
    <property type="term" value="C:mitochondrion"/>
    <property type="evidence" value="ECO:0000266"/>
    <property type="project" value="PomBase"/>
</dbReference>
<dbReference type="GO" id="GO:0005634">
    <property type="term" value="C:nucleus"/>
    <property type="evidence" value="ECO:0007005"/>
    <property type="project" value="PomBase"/>
</dbReference>
<dbReference type="GO" id="GO:0046872">
    <property type="term" value="F:metal ion binding"/>
    <property type="evidence" value="ECO:0007669"/>
    <property type="project" value="UniProtKB-KW"/>
</dbReference>
<dbReference type="GO" id="GO:0009982">
    <property type="term" value="F:pseudouridine synthase activity"/>
    <property type="evidence" value="ECO:0000318"/>
    <property type="project" value="GO_Central"/>
</dbReference>
<dbReference type="GO" id="GO:0003723">
    <property type="term" value="F:RNA binding"/>
    <property type="evidence" value="ECO:0007669"/>
    <property type="project" value="InterPro"/>
</dbReference>
<dbReference type="GO" id="GO:0106029">
    <property type="term" value="F:tRNA pseudouridine synthase activity"/>
    <property type="evidence" value="ECO:0007669"/>
    <property type="project" value="RHEA"/>
</dbReference>
<dbReference type="GO" id="GO:1990481">
    <property type="term" value="P:mRNA pseudouridine synthesis"/>
    <property type="evidence" value="ECO:0000318"/>
    <property type="project" value="GO_Central"/>
</dbReference>
<dbReference type="GO" id="GO:0031119">
    <property type="term" value="P:tRNA pseudouridine synthesis"/>
    <property type="evidence" value="ECO:0000318"/>
    <property type="project" value="GO_Central"/>
</dbReference>
<dbReference type="CDD" id="cd02568">
    <property type="entry name" value="PseudoU_synth_PUS1_PUS2"/>
    <property type="match status" value="1"/>
</dbReference>
<dbReference type="FunFam" id="3.30.70.580:FF:000002">
    <property type="entry name" value="tRNA pseudouridine synthase"/>
    <property type="match status" value="1"/>
</dbReference>
<dbReference type="FunFam" id="3.30.70.660:FF:000015">
    <property type="entry name" value="tRNA pseudouridine synthase"/>
    <property type="match status" value="1"/>
</dbReference>
<dbReference type="Gene3D" id="3.30.70.660">
    <property type="entry name" value="Pseudouridine synthase I, catalytic domain, C-terminal subdomain"/>
    <property type="match status" value="1"/>
</dbReference>
<dbReference type="Gene3D" id="3.30.70.580">
    <property type="entry name" value="Pseudouridine synthase I, catalytic domain, N-terminal subdomain"/>
    <property type="match status" value="1"/>
</dbReference>
<dbReference type="InterPro" id="IPR020103">
    <property type="entry name" value="PsdUridine_synth_cat_dom_sf"/>
</dbReference>
<dbReference type="InterPro" id="IPR001406">
    <property type="entry name" value="PsdUridine_synth_TruA"/>
</dbReference>
<dbReference type="InterPro" id="IPR020097">
    <property type="entry name" value="PsdUridine_synth_TruA_a/b_dom"/>
</dbReference>
<dbReference type="InterPro" id="IPR020095">
    <property type="entry name" value="PsdUridine_synth_TruA_C"/>
</dbReference>
<dbReference type="InterPro" id="IPR041708">
    <property type="entry name" value="PUS1/PUS2-like"/>
</dbReference>
<dbReference type="InterPro" id="IPR020094">
    <property type="entry name" value="TruA/RsuA/RluB/E/F_N"/>
</dbReference>
<dbReference type="NCBIfam" id="TIGR00071">
    <property type="entry name" value="hisT_truA"/>
    <property type="match status" value="1"/>
</dbReference>
<dbReference type="PANTHER" id="PTHR11142">
    <property type="entry name" value="PSEUDOURIDYLATE SYNTHASE"/>
    <property type="match status" value="1"/>
</dbReference>
<dbReference type="PANTHER" id="PTHR11142:SF28">
    <property type="entry name" value="TRNA PSEUDOURIDINE SYNTHASE 2"/>
    <property type="match status" value="1"/>
</dbReference>
<dbReference type="Pfam" id="PF01416">
    <property type="entry name" value="PseudoU_synth_1"/>
    <property type="match status" value="1"/>
</dbReference>
<dbReference type="SUPFAM" id="SSF55120">
    <property type="entry name" value="Pseudouridine synthase"/>
    <property type="match status" value="1"/>
</dbReference>
<organism>
    <name type="scientific">Schizosaccharomyces pombe (strain 972 / ATCC 24843)</name>
    <name type="common">Fission yeast</name>
    <dbReference type="NCBI Taxonomy" id="284812"/>
    <lineage>
        <taxon>Eukaryota</taxon>
        <taxon>Fungi</taxon>
        <taxon>Dikarya</taxon>
        <taxon>Ascomycota</taxon>
        <taxon>Taphrinomycotina</taxon>
        <taxon>Schizosaccharomycetes</taxon>
        <taxon>Schizosaccharomycetales</taxon>
        <taxon>Schizosaccharomycetaceae</taxon>
        <taxon>Schizosaccharomyces</taxon>
    </lineage>
</organism>
<keyword id="KW-0413">Isomerase</keyword>
<keyword id="KW-0479">Metal-binding</keyword>
<keyword id="KW-0539">Nucleus</keyword>
<keyword id="KW-1185">Reference proteome</keyword>
<keyword id="KW-0819">tRNA processing</keyword>
<keyword id="KW-0862">Zinc</keyword>
<feature type="chain" id="PRO_0000057531" description="tRNA pseudouridine synthase 2">
    <location>
        <begin position="1"/>
        <end position="451"/>
    </location>
</feature>
<feature type="region of interest" description="Disordered" evidence="2">
    <location>
        <begin position="1"/>
        <end position="30"/>
    </location>
</feature>
<feature type="compositionally biased region" description="Basic and acidic residues" evidence="2">
    <location>
        <begin position="9"/>
        <end position="30"/>
    </location>
</feature>
<feature type="active site" description="Nucleophile" evidence="1">
    <location>
        <position position="97"/>
    </location>
</feature>
<feature type="binding site" evidence="1">
    <location>
        <position position="157"/>
    </location>
    <ligand>
        <name>substrate</name>
    </ligand>
</feature>
<evidence type="ECO:0000250" key="1"/>
<evidence type="ECO:0000256" key="2">
    <source>
        <dbReference type="SAM" id="MobiDB-lite"/>
    </source>
</evidence>
<evidence type="ECO:0000305" key="3"/>
<name>PUS2_SCHPO</name>
<reference key="1">
    <citation type="journal article" date="2002" name="Nature">
        <title>The genome sequence of Schizosaccharomyces pombe.</title>
        <authorList>
            <person name="Wood V."/>
            <person name="Gwilliam R."/>
            <person name="Rajandream M.A."/>
            <person name="Lyne M.H."/>
            <person name="Lyne R."/>
            <person name="Stewart A."/>
            <person name="Sgouros J.G."/>
            <person name="Peat N."/>
            <person name="Hayles J."/>
            <person name="Baker S.G."/>
            <person name="Basham D."/>
            <person name="Bowman S."/>
            <person name="Brooks K."/>
            <person name="Brown D."/>
            <person name="Brown S."/>
            <person name="Chillingworth T."/>
            <person name="Churcher C.M."/>
            <person name="Collins M."/>
            <person name="Connor R."/>
            <person name="Cronin A."/>
            <person name="Davis P."/>
            <person name="Feltwell T."/>
            <person name="Fraser A."/>
            <person name="Gentles S."/>
            <person name="Goble A."/>
            <person name="Hamlin N."/>
            <person name="Harris D.E."/>
            <person name="Hidalgo J."/>
            <person name="Hodgson G."/>
            <person name="Holroyd S."/>
            <person name="Hornsby T."/>
            <person name="Howarth S."/>
            <person name="Huckle E.J."/>
            <person name="Hunt S."/>
            <person name="Jagels K."/>
            <person name="James K.D."/>
            <person name="Jones L."/>
            <person name="Jones M."/>
            <person name="Leather S."/>
            <person name="McDonald S."/>
            <person name="McLean J."/>
            <person name="Mooney P."/>
            <person name="Moule S."/>
            <person name="Mungall K.L."/>
            <person name="Murphy L.D."/>
            <person name="Niblett D."/>
            <person name="Odell C."/>
            <person name="Oliver K."/>
            <person name="O'Neil S."/>
            <person name="Pearson D."/>
            <person name="Quail M.A."/>
            <person name="Rabbinowitsch E."/>
            <person name="Rutherford K.M."/>
            <person name="Rutter S."/>
            <person name="Saunders D."/>
            <person name="Seeger K."/>
            <person name="Sharp S."/>
            <person name="Skelton J."/>
            <person name="Simmonds M.N."/>
            <person name="Squares R."/>
            <person name="Squares S."/>
            <person name="Stevens K."/>
            <person name="Taylor K."/>
            <person name="Taylor R.G."/>
            <person name="Tivey A."/>
            <person name="Walsh S.V."/>
            <person name="Warren T."/>
            <person name="Whitehead S."/>
            <person name="Woodward J.R."/>
            <person name="Volckaert G."/>
            <person name="Aert R."/>
            <person name="Robben J."/>
            <person name="Grymonprez B."/>
            <person name="Weltjens I."/>
            <person name="Vanstreels E."/>
            <person name="Rieger M."/>
            <person name="Schaefer M."/>
            <person name="Mueller-Auer S."/>
            <person name="Gabel C."/>
            <person name="Fuchs M."/>
            <person name="Duesterhoeft A."/>
            <person name="Fritzc C."/>
            <person name="Holzer E."/>
            <person name="Moestl D."/>
            <person name="Hilbert H."/>
            <person name="Borzym K."/>
            <person name="Langer I."/>
            <person name="Beck A."/>
            <person name="Lehrach H."/>
            <person name="Reinhardt R."/>
            <person name="Pohl T.M."/>
            <person name="Eger P."/>
            <person name="Zimmermann W."/>
            <person name="Wedler H."/>
            <person name="Wambutt R."/>
            <person name="Purnelle B."/>
            <person name="Goffeau A."/>
            <person name="Cadieu E."/>
            <person name="Dreano S."/>
            <person name="Gloux S."/>
            <person name="Lelaure V."/>
            <person name="Mottier S."/>
            <person name="Galibert F."/>
            <person name="Aves S.J."/>
            <person name="Xiang Z."/>
            <person name="Hunt C."/>
            <person name="Moore K."/>
            <person name="Hurst S.M."/>
            <person name="Lucas M."/>
            <person name="Rochet M."/>
            <person name="Gaillardin C."/>
            <person name="Tallada V.A."/>
            <person name="Garzon A."/>
            <person name="Thode G."/>
            <person name="Daga R.R."/>
            <person name="Cruzado L."/>
            <person name="Jimenez J."/>
            <person name="Sanchez M."/>
            <person name="del Rey F."/>
            <person name="Benito J."/>
            <person name="Dominguez A."/>
            <person name="Revuelta J.L."/>
            <person name="Moreno S."/>
            <person name="Armstrong J."/>
            <person name="Forsburg S.L."/>
            <person name="Cerutti L."/>
            <person name="Lowe T."/>
            <person name="McCombie W.R."/>
            <person name="Paulsen I."/>
            <person name="Potashkin J."/>
            <person name="Shpakovski G.V."/>
            <person name="Ussery D."/>
            <person name="Barrell B.G."/>
            <person name="Nurse P."/>
        </authorList>
    </citation>
    <scope>NUCLEOTIDE SEQUENCE [LARGE SCALE GENOMIC DNA]</scope>
    <source>
        <strain>972 / ATCC 24843</strain>
    </source>
</reference>
<comment type="function">
    <text evidence="1">Formation of pseudouridine at positions 27 and 28 in the anticodon stem and loop of transfer RNAs; at positions 34 and 36 of intron-containing precursor tRNA(Ile) and at position 35 in the intron-containing tRNA(Tyr).</text>
</comment>
<comment type="catalytic activity">
    <reaction>
        <text>a uridine in tRNA = a pseudouridine in tRNA</text>
        <dbReference type="Rhea" id="RHEA:54572"/>
        <dbReference type="Rhea" id="RHEA-COMP:13339"/>
        <dbReference type="Rhea" id="RHEA-COMP:13934"/>
        <dbReference type="ChEBI" id="CHEBI:65314"/>
        <dbReference type="ChEBI" id="CHEBI:65315"/>
    </reaction>
</comment>
<comment type="cofactor">
    <cofactor evidence="1">
        <name>Zn(2+)</name>
        <dbReference type="ChEBI" id="CHEBI:29105"/>
    </cofactor>
    <text evidence="1">Binds 1 zinc ion per subunit.</text>
</comment>
<comment type="subcellular location">
    <subcellularLocation>
        <location evidence="1">Nucleus</location>
    </subcellularLocation>
</comment>
<comment type="similarity">
    <text evidence="3">Belongs to the tRNA pseudouridine synthase TruA family.</text>
</comment>
<accession>O94295</accession>
<sequence length="451" mass="52272">MTSISKRKNQQEHIPAEDLETPKLPKREKIEGTKESNKVRIIILLGYSGYGYHGIQINNPLKTIEGDVVAVLKKLGYLKTNNIDAEHLCIARAARTDKGVHTLRNLISLNLFVDKPLDISLLKTELNEALCSQIRVWSVFPAPKYFNPRISCESRTYEYLIPSFALLPPKPSCPLFKKMQKNLSRKLDNELERNLVYSMNDLISFWNTVKLKQKEIQEMFDTNKDAFTNPFKGMFYEKPIPAGIVIPPQAKLKKALKQAEYYCYMNYRIKEDRLKVLQQLLKKYEGRHNFHNFTVTDDSTSPSNYRFIESVTCGTPFVYENWEWIPVTIKGNSFMLNQIRKMMAHVLMIIRSCAPTGLIDKAFDPNITMNISKSPGHVLLLKDIKFSSYNDSVTDGLEKIQFDCFEEDILSLKIKTIYPDIIKLEQKEKLFFSFLSYIDQHTGHQFDYLFG</sequence>
<proteinExistence type="inferred from homology"/>